<proteinExistence type="inferred from homology"/>
<comment type="function">
    <text evidence="1">Involved in the synthesis of autoinducer 2 (AI-2) which is secreted by bacteria and is used to communicate both the cell density and the metabolic potential of the environment. The regulation of gene expression in response to changes in cell density is called quorum sensing. Catalyzes the transformation of S-ribosylhomocysteine (RHC) to homocysteine (HC) and 4,5-dihydroxy-2,3-pentadione (DPD).</text>
</comment>
<comment type="catalytic activity">
    <reaction evidence="1">
        <text>S-(5-deoxy-D-ribos-5-yl)-L-homocysteine = (S)-4,5-dihydroxypentane-2,3-dione + L-homocysteine</text>
        <dbReference type="Rhea" id="RHEA:17753"/>
        <dbReference type="ChEBI" id="CHEBI:29484"/>
        <dbReference type="ChEBI" id="CHEBI:58195"/>
        <dbReference type="ChEBI" id="CHEBI:58199"/>
        <dbReference type="EC" id="4.4.1.21"/>
    </reaction>
</comment>
<comment type="cofactor">
    <cofactor evidence="1">
        <name>Fe cation</name>
        <dbReference type="ChEBI" id="CHEBI:24875"/>
    </cofactor>
    <text evidence="1">Binds 1 Fe cation per subunit.</text>
</comment>
<comment type="subunit">
    <text evidence="1">Homodimer.</text>
</comment>
<comment type="similarity">
    <text evidence="1">Belongs to the LuxS family.</text>
</comment>
<keyword id="KW-0071">Autoinducer synthesis</keyword>
<keyword id="KW-0408">Iron</keyword>
<keyword id="KW-0456">Lyase</keyword>
<keyword id="KW-0479">Metal-binding</keyword>
<keyword id="KW-0673">Quorum sensing</keyword>
<protein>
    <recommendedName>
        <fullName evidence="1">S-ribosylhomocysteine lyase</fullName>
        <ecNumber evidence="1">4.4.1.21</ecNumber>
    </recommendedName>
    <alternativeName>
        <fullName evidence="1">AI-2 synthesis protein</fullName>
    </alternativeName>
    <alternativeName>
        <fullName evidence="1">Autoinducer-2 production protein LuxS</fullName>
    </alternativeName>
</protein>
<sequence length="172" mass="19081">MPLLDSFTVDHTRMNAPAVRVAKTMQTPKGDTITVFDLRFTMPNKDILSERGIHTLEHLYAGFMRNHLNGSQVEIIDISPMGCRTGFYMSLIGAPTEQQVAQAWLAAMQDVLKVESQEQIPELNEYQCGTAAMHSLEEAKAIAKNVIAAGISVNRNDELALPESMLNELKVH</sequence>
<accession>C3LS47</accession>
<name>LUXS_VIBCM</name>
<evidence type="ECO:0000255" key="1">
    <source>
        <dbReference type="HAMAP-Rule" id="MF_00091"/>
    </source>
</evidence>
<gene>
    <name evidence="1" type="primary">luxS</name>
    <name type="ordered locus">VCM66_0515</name>
</gene>
<dbReference type="EC" id="4.4.1.21" evidence="1"/>
<dbReference type="EMBL" id="CP001233">
    <property type="protein sequence ID" value="ACP04840.1"/>
    <property type="molecule type" value="Genomic_DNA"/>
</dbReference>
<dbReference type="RefSeq" id="WP_001130227.1">
    <property type="nucleotide sequence ID" value="NC_012578.1"/>
</dbReference>
<dbReference type="SMR" id="C3LS47"/>
<dbReference type="GeneID" id="69720681"/>
<dbReference type="KEGG" id="vcm:VCM66_0515"/>
<dbReference type="HOGENOM" id="CLU_107531_2_0_6"/>
<dbReference type="Proteomes" id="UP000001217">
    <property type="component" value="Chromosome I"/>
</dbReference>
<dbReference type="GO" id="GO:0005506">
    <property type="term" value="F:iron ion binding"/>
    <property type="evidence" value="ECO:0007669"/>
    <property type="project" value="InterPro"/>
</dbReference>
<dbReference type="GO" id="GO:0043768">
    <property type="term" value="F:S-ribosylhomocysteine lyase activity"/>
    <property type="evidence" value="ECO:0007669"/>
    <property type="project" value="UniProtKB-UniRule"/>
</dbReference>
<dbReference type="GO" id="GO:0009372">
    <property type="term" value="P:quorum sensing"/>
    <property type="evidence" value="ECO:0007669"/>
    <property type="project" value="UniProtKB-UniRule"/>
</dbReference>
<dbReference type="FunFam" id="3.30.1360.80:FF:000001">
    <property type="entry name" value="S-ribosylhomocysteine lyase"/>
    <property type="match status" value="1"/>
</dbReference>
<dbReference type="Gene3D" id="3.30.1360.80">
    <property type="entry name" value="S-ribosylhomocysteinase (LuxS)"/>
    <property type="match status" value="1"/>
</dbReference>
<dbReference type="HAMAP" id="MF_00091">
    <property type="entry name" value="LuxS"/>
    <property type="match status" value="1"/>
</dbReference>
<dbReference type="InterPro" id="IPR037005">
    <property type="entry name" value="LuxS_sf"/>
</dbReference>
<dbReference type="InterPro" id="IPR011249">
    <property type="entry name" value="Metalloenz_LuxS/M16"/>
</dbReference>
<dbReference type="InterPro" id="IPR003815">
    <property type="entry name" value="S-ribosylhomocysteinase"/>
</dbReference>
<dbReference type="NCBIfam" id="NF002602">
    <property type="entry name" value="PRK02260.1-2"/>
    <property type="match status" value="1"/>
</dbReference>
<dbReference type="PANTHER" id="PTHR35799">
    <property type="entry name" value="S-RIBOSYLHOMOCYSTEINE LYASE"/>
    <property type="match status" value="1"/>
</dbReference>
<dbReference type="PANTHER" id="PTHR35799:SF1">
    <property type="entry name" value="S-RIBOSYLHOMOCYSTEINE LYASE"/>
    <property type="match status" value="1"/>
</dbReference>
<dbReference type="Pfam" id="PF02664">
    <property type="entry name" value="LuxS"/>
    <property type="match status" value="1"/>
</dbReference>
<dbReference type="PIRSF" id="PIRSF006160">
    <property type="entry name" value="AI2"/>
    <property type="match status" value="1"/>
</dbReference>
<dbReference type="PRINTS" id="PR01487">
    <property type="entry name" value="LUXSPROTEIN"/>
</dbReference>
<dbReference type="SUPFAM" id="SSF63411">
    <property type="entry name" value="LuxS/MPP-like metallohydrolase"/>
    <property type="match status" value="1"/>
</dbReference>
<organism>
    <name type="scientific">Vibrio cholerae serotype O1 (strain M66-2)</name>
    <dbReference type="NCBI Taxonomy" id="579112"/>
    <lineage>
        <taxon>Bacteria</taxon>
        <taxon>Pseudomonadati</taxon>
        <taxon>Pseudomonadota</taxon>
        <taxon>Gammaproteobacteria</taxon>
        <taxon>Vibrionales</taxon>
        <taxon>Vibrionaceae</taxon>
        <taxon>Vibrio</taxon>
    </lineage>
</organism>
<feature type="chain" id="PRO_1000191046" description="S-ribosylhomocysteine lyase">
    <location>
        <begin position="1"/>
        <end position="172"/>
    </location>
</feature>
<feature type="binding site" evidence="1">
    <location>
        <position position="54"/>
    </location>
    <ligand>
        <name>Fe cation</name>
        <dbReference type="ChEBI" id="CHEBI:24875"/>
    </ligand>
</feature>
<feature type="binding site" evidence="1">
    <location>
        <position position="58"/>
    </location>
    <ligand>
        <name>Fe cation</name>
        <dbReference type="ChEBI" id="CHEBI:24875"/>
    </ligand>
</feature>
<feature type="binding site" evidence="1">
    <location>
        <position position="128"/>
    </location>
    <ligand>
        <name>Fe cation</name>
        <dbReference type="ChEBI" id="CHEBI:24875"/>
    </ligand>
</feature>
<reference key="1">
    <citation type="journal article" date="2008" name="PLoS ONE">
        <title>A recalibrated molecular clock and independent origins for the cholera pandemic clones.</title>
        <authorList>
            <person name="Feng L."/>
            <person name="Reeves P.R."/>
            <person name="Lan R."/>
            <person name="Ren Y."/>
            <person name="Gao C."/>
            <person name="Zhou Z."/>
            <person name="Ren Y."/>
            <person name="Cheng J."/>
            <person name="Wang W."/>
            <person name="Wang J."/>
            <person name="Qian W."/>
            <person name="Li D."/>
            <person name="Wang L."/>
        </authorList>
    </citation>
    <scope>NUCLEOTIDE SEQUENCE [LARGE SCALE GENOMIC DNA]</scope>
    <source>
        <strain>M66-2</strain>
    </source>
</reference>